<proteinExistence type="inferred from homology"/>
<sequence length="109" mass="11863">MMRGGMGNMNNMMKQMQKMQKEMAKAQEELGEKTVEGTAGGGMITVIANGHKQILEVKVKEEVVDPEDIEMLQDLVLAATNDALKKADELSNSTMGKFTKGLNLPGGMF</sequence>
<accession>Q63HE9</accession>
<name>Y020_BACCZ</name>
<feature type="chain" id="PRO_1000003685" description="Nucleoid-associated protein BCE33L0020">
    <location>
        <begin position="1"/>
        <end position="109"/>
    </location>
</feature>
<protein>
    <recommendedName>
        <fullName evidence="1">Nucleoid-associated protein BCE33L0020</fullName>
    </recommendedName>
</protein>
<comment type="function">
    <text evidence="1">Binds to DNA and alters its conformation. May be involved in regulation of gene expression, nucleoid organization and DNA protection.</text>
</comment>
<comment type="subunit">
    <text evidence="1">Homodimer.</text>
</comment>
<comment type="subcellular location">
    <subcellularLocation>
        <location evidence="1">Cytoplasm</location>
        <location evidence="1">Nucleoid</location>
    </subcellularLocation>
</comment>
<comment type="similarity">
    <text evidence="1">Belongs to the YbaB/EbfC family.</text>
</comment>
<gene>
    <name type="ordered locus">BCE33L0020</name>
</gene>
<reference key="1">
    <citation type="journal article" date="2006" name="J. Bacteriol.">
        <title>Pathogenomic sequence analysis of Bacillus cereus and Bacillus thuringiensis isolates closely related to Bacillus anthracis.</title>
        <authorList>
            <person name="Han C.S."/>
            <person name="Xie G."/>
            <person name="Challacombe J.F."/>
            <person name="Altherr M.R."/>
            <person name="Bhotika S.S."/>
            <person name="Bruce D."/>
            <person name="Campbell C.S."/>
            <person name="Campbell M.L."/>
            <person name="Chen J."/>
            <person name="Chertkov O."/>
            <person name="Cleland C."/>
            <person name="Dimitrijevic M."/>
            <person name="Doggett N.A."/>
            <person name="Fawcett J.J."/>
            <person name="Glavina T."/>
            <person name="Goodwin L.A."/>
            <person name="Hill K.K."/>
            <person name="Hitchcock P."/>
            <person name="Jackson P.J."/>
            <person name="Keim P."/>
            <person name="Kewalramani A.R."/>
            <person name="Longmire J."/>
            <person name="Lucas S."/>
            <person name="Malfatti S."/>
            <person name="McMurry K."/>
            <person name="Meincke L.J."/>
            <person name="Misra M."/>
            <person name="Moseman B.L."/>
            <person name="Mundt M."/>
            <person name="Munk A.C."/>
            <person name="Okinaka R.T."/>
            <person name="Parson-Quintana B."/>
            <person name="Reilly L.P."/>
            <person name="Richardson P."/>
            <person name="Robinson D.L."/>
            <person name="Rubin E."/>
            <person name="Saunders E."/>
            <person name="Tapia R."/>
            <person name="Tesmer J.G."/>
            <person name="Thayer N."/>
            <person name="Thompson L.S."/>
            <person name="Tice H."/>
            <person name="Ticknor L.O."/>
            <person name="Wills P.L."/>
            <person name="Brettin T.S."/>
            <person name="Gilna P."/>
        </authorList>
    </citation>
    <scope>NUCLEOTIDE SEQUENCE [LARGE SCALE GENOMIC DNA]</scope>
    <source>
        <strain>ZK / E33L</strain>
    </source>
</reference>
<keyword id="KW-0963">Cytoplasm</keyword>
<keyword id="KW-0238">DNA-binding</keyword>
<dbReference type="EMBL" id="CP000001">
    <property type="protein sequence ID" value="AAU20208.1"/>
    <property type="molecule type" value="Genomic_DNA"/>
</dbReference>
<dbReference type="SMR" id="Q63HE9"/>
<dbReference type="KEGG" id="bcz:BCE33L0020"/>
<dbReference type="PATRIC" id="fig|288681.22.peg.136"/>
<dbReference type="Proteomes" id="UP000002612">
    <property type="component" value="Chromosome"/>
</dbReference>
<dbReference type="GO" id="GO:0043590">
    <property type="term" value="C:bacterial nucleoid"/>
    <property type="evidence" value="ECO:0007669"/>
    <property type="project" value="UniProtKB-UniRule"/>
</dbReference>
<dbReference type="GO" id="GO:0005829">
    <property type="term" value="C:cytosol"/>
    <property type="evidence" value="ECO:0007669"/>
    <property type="project" value="TreeGrafter"/>
</dbReference>
<dbReference type="GO" id="GO:0003677">
    <property type="term" value="F:DNA binding"/>
    <property type="evidence" value="ECO:0007669"/>
    <property type="project" value="UniProtKB-UniRule"/>
</dbReference>
<dbReference type="FunFam" id="3.30.1310.10:FF:000002">
    <property type="entry name" value="Nucleoid-associated protein IKC_06587"/>
    <property type="match status" value="1"/>
</dbReference>
<dbReference type="Gene3D" id="3.30.1310.10">
    <property type="entry name" value="Nucleoid-associated protein YbaB-like domain"/>
    <property type="match status" value="1"/>
</dbReference>
<dbReference type="HAMAP" id="MF_00274">
    <property type="entry name" value="DNA_YbaB_EbfC"/>
    <property type="match status" value="1"/>
</dbReference>
<dbReference type="InterPro" id="IPR036894">
    <property type="entry name" value="YbaB-like_sf"/>
</dbReference>
<dbReference type="InterPro" id="IPR004401">
    <property type="entry name" value="YbaB/EbfC"/>
</dbReference>
<dbReference type="NCBIfam" id="TIGR00103">
    <property type="entry name" value="DNA_YbaB_EbfC"/>
    <property type="match status" value="1"/>
</dbReference>
<dbReference type="PANTHER" id="PTHR33449">
    <property type="entry name" value="NUCLEOID-ASSOCIATED PROTEIN YBAB"/>
    <property type="match status" value="1"/>
</dbReference>
<dbReference type="PANTHER" id="PTHR33449:SF1">
    <property type="entry name" value="NUCLEOID-ASSOCIATED PROTEIN YBAB"/>
    <property type="match status" value="1"/>
</dbReference>
<dbReference type="Pfam" id="PF02575">
    <property type="entry name" value="YbaB_DNA_bd"/>
    <property type="match status" value="1"/>
</dbReference>
<dbReference type="PIRSF" id="PIRSF004555">
    <property type="entry name" value="UCP004555"/>
    <property type="match status" value="1"/>
</dbReference>
<dbReference type="SUPFAM" id="SSF82607">
    <property type="entry name" value="YbaB-like"/>
    <property type="match status" value="1"/>
</dbReference>
<organism>
    <name type="scientific">Bacillus cereus (strain ZK / E33L)</name>
    <dbReference type="NCBI Taxonomy" id="288681"/>
    <lineage>
        <taxon>Bacteria</taxon>
        <taxon>Bacillati</taxon>
        <taxon>Bacillota</taxon>
        <taxon>Bacilli</taxon>
        <taxon>Bacillales</taxon>
        <taxon>Bacillaceae</taxon>
        <taxon>Bacillus</taxon>
        <taxon>Bacillus cereus group</taxon>
    </lineage>
</organism>
<evidence type="ECO:0000255" key="1">
    <source>
        <dbReference type="HAMAP-Rule" id="MF_00274"/>
    </source>
</evidence>